<dbReference type="EC" id="2.7.7.8" evidence="1"/>
<dbReference type="EMBL" id="CP000806">
    <property type="protein sequence ID" value="ACB49974.1"/>
    <property type="molecule type" value="Genomic_DNA"/>
</dbReference>
<dbReference type="RefSeq" id="WP_009547814.1">
    <property type="nucleotide sequence ID" value="NC_010546.1"/>
</dbReference>
<dbReference type="SMR" id="B1WQ52"/>
<dbReference type="STRING" id="43989.cce_0623"/>
<dbReference type="KEGG" id="cyt:cce_0623"/>
<dbReference type="eggNOG" id="COG1185">
    <property type="taxonomic scope" value="Bacteria"/>
</dbReference>
<dbReference type="HOGENOM" id="CLU_004217_2_2_3"/>
<dbReference type="OrthoDB" id="9804305at2"/>
<dbReference type="Proteomes" id="UP000001203">
    <property type="component" value="Chromosome circular"/>
</dbReference>
<dbReference type="GO" id="GO:0005829">
    <property type="term" value="C:cytosol"/>
    <property type="evidence" value="ECO:0007669"/>
    <property type="project" value="TreeGrafter"/>
</dbReference>
<dbReference type="GO" id="GO:0000175">
    <property type="term" value="F:3'-5'-RNA exonuclease activity"/>
    <property type="evidence" value="ECO:0007669"/>
    <property type="project" value="TreeGrafter"/>
</dbReference>
<dbReference type="GO" id="GO:0000287">
    <property type="term" value="F:magnesium ion binding"/>
    <property type="evidence" value="ECO:0007669"/>
    <property type="project" value="UniProtKB-UniRule"/>
</dbReference>
<dbReference type="GO" id="GO:0004654">
    <property type="term" value="F:polyribonucleotide nucleotidyltransferase activity"/>
    <property type="evidence" value="ECO:0007669"/>
    <property type="project" value="UniProtKB-UniRule"/>
</dbReference>
<dbReference type="GO" id="GO:0003723">
    <property type="term" value="F:RNA binding"/>
    <property type="evidence" value="ECO:0007669"/>
    <property type="project" value="UniProtKB-UniRule"/>
</dbReference>
<dbReference type="GO" id="GO:0006402">
    <property type="term" value="P:mRNA catabolic process"/>
    <property type="evidence" value="ECO:0007669"/>
    <property type="project" value="UniProtKB-UniRule"/>
</dbReference>
<dbReference type="GO" id="GO:0006396">
    <property type="term" value="P:RNA processing"/>
    <property type="evidence" value="ECO:0007669"/>
    <property type="project" value="InterPro"/>
</dbReference>
<dbReference type="CDD" id="cd02393">
    <property type="entry name" value="KH-I_PNPase"/>
    <property type="match status" value="1"/>
</dbReference>
<dbReference type="CDD" id="cd11364">
    <property type="entry name" value="RNase_PH_PNPase_2"/>
    <property type="match status" value="1"/>
</dbReference>
<dbReference type="CDD" id="cd04472">
    <property type="entry name" value="S1_PNPase"/>
    <property type="match status" value="1"/>
</dbReference>
<dbReference type="FunFam" id="3.30.1370.10:FF:000001">
    <property type="entry name" value="Polyribonucleotide nucleotidyltransferase"/>
    <property type="match status" value="1"/>
</dbReference>
<dbReference type="FunFam" id="3.30.230.70:FF:000001">
    <property type="entry name" value="Polyribonucleotide nucleotidyltransferase"/>
    <property type="match status" value="1"/>
</dbReference>
<dbReference type="FunFam" id="3.30.230.70:FF:000002">
    <property type="entry name" value="Polyribonucleotide nucleotidyltransferase"/>
    <property type="match status" value="1"/>
</dbReference>
<dbReference type="Gene3D" id="3.30.230.70">
    <property type="entry name" value="GHMP Kinase, N-terminal domain"/>
    <property type="match status" value="2"/>
</dbReference>
<dbReference type="Gene3D" id="3.30.1370.10">
    <property type="entry name" value="K Homology domain, type 1"/>
    <property type="match status" value="1"/>
</dbReference>
<dbReference type="Gene3D" id="2.40.50.140">
    <property type="entry name" value="Nucleic acid-binding proteins"/>
    <property type="match status" value="1"/>
</dbReference>
<dbReference type="HAMAP" id="MF_01595">
    <property type="entry name" value="PNPase"/>
    <property type="match status" value="1"/>
</dbReference>
<dbReference type="InterPro" id="IPR001247">
    <property type="entry name" value="ExoRNase_PH_dom1"/>
</dbReference>
<dbReference type="InterPro" id="IPR015847">
    <property type="entry name" value="ExoRNase_PH_dom2"/>
</dbReference>
<dbReference type="InterPro" id="IPR036345">
    <property type="entry name" value="ExoRNase_PH_dom2_sf"/>
</dbReference>
<dbReference type="InterPro" id="IPR004087">
    <property type="entry name" value="KH_dom"/>
</dbReference>
<dbReference type="InterPro" id="IPR004088">
    <property type="entry name" value="KH_dom_type_1"/>
</dbReference>
<dbReference type="InterPro" id="IPR036612">
    <property type="entry name" value="KH_dom_type_1_sf"/>
</dbReference>
<dbReference type="InterPro" id="IPR012340">
    <property type="entry name" value="NA-bd_OB-fold"/>
</dbReference>
<dbReference type="InterPro" id="IPR012162">
    <property type="entry name" value="PNPase"/>
</dbReference>
<dbReference type="InterPro" id="IPR027408">
    <property type="entry name" value="PNPase/RNase_PH_dom_sf"/>
</dbReference>
<dbReference type="InterPro" id="IPR015848">
    <property type="entry name" value="PNPase_PH_RNA-bd_bac/org-type"/>
</dbReference>
<dbReference type="InterPro" id="IPR036456">
    <property type="entry name" value="PNPase_PH_RNA-bd_sf"/>
</dbReference>
<dbReference type="InterPro" id="IPR020568">
    <property type="entry name" value="Ribosomal_Su5_D2-typ_SF"/>
</dbReference>
<dbReference type="InterPro" id="IPR003029">
    <property type="entry name" value="S1_domain"/>
</dbReference>
<dbReference type="NCBIfam" id="TIGR03591">
    <property type="entry name" value="polynuc_phos"/>
    <property type="match status" value="1"/>
</dbReference>
<dbReference type="NCBIfam" id="NF008805">
    <property type="entry name" value="PRK11824.1"/>
    <property type="match status" value="1"/>
</dbReference>
<dbReference type="PANTHER" id="PTHR11252">
    <property type="entry name" value="POLYRIBONUCLEOTIDE NUCLEOTIDYLTRANSFERASE"/>
    <property type="match status" value="1"/>
</dbReference>
<dbReference type="PANTHER" id="PTHR11252:SF0">
    <property type="entry name" value="POLYRIBONUCLEOTIDE NUCLEOTIDYLTRANSFERASE 1, MITOCHONDRIAL"/>
    <property type="match status" value="1"/>
</dbReference>
<dbReference type="Pfam" id="PF00013">
    <property type="entry name" value="KH_1"/>
    <property type="match status" value="1"/>
</dbReference>
<dbReference type="Pfam" id="PF03726">
    <property type="entry name" value="PNPase"/>
    <property type="match status" value="1"/>
</dbReference>
<dbReference type="Pfam" id="PF01138">
    <property type="entry name" value="RNase_PH"/>
    <property type="match status" value="2"/>
</dbReference>
<dbReference type="Pfam" id="PF03725">
    <property type="entry name" value="RNase_PH_C"/>
    <property type="match status" value="2"/>
</dbReference>
<dbReference type="Pfam" id="PF00575">
    <property type="entry name" value="S1"/>
    <property type="match status" value="1"/>
</dbReference>
<dbReference type="PIRSF" id="PIRSF005499">
    <property type="entry name" value="PNPase"/>
    <property type="match status" value="1"/>
</dbReference>
<dbReference type="SMART" id="SM00322">
    <property type="entry name" value="KH"/>
    <property type="match status" value="1"/>
</dbReference>
<dbReference type="SMART" id="SM00316">
    <property type="entry name" value="S1"/>
    <property type="match status" value="1"/>
</dbReference>
<dbReference type="SUPFAM" id="SSF54791">
    <property type="entry name" value="Eukaryotic type KH-domain (KH-domain type I)"/>
    <property type="match status" value="1"/>
</dbReference>
<dbReference type="SUPFAM" id="SSF50249">
    <property type="entry name" value="Nucleic acid-binding proteins"/>
    <property type="match status" value="1"/>
</dbReference>
<dbReference type="SUPFAM" id="SSF46915">
    <property type="entry name" value="Polynucleotide phosphorylase/guanosine pentaphosphate synthase (PNPase/GPSI), domain 3"/>
    <property type="match status" value="1"/>
</dbReference>
<dbReference type="SUPFAM" id="SSF55666">
    <property type="entry name" value="Ribonuclease PH domain 2-like"/>
    <property type="match status" value="2"/>
</dbReference>
<dbReference type="SUPFAM" id="SSF54211">
    <property type="entry name" value="Ribosomal protein S5 domain 2-like"/>
    <property type="match status" value="2"/>
</dbReference>
<dbReference type="PROSITE" id="PS50084">
    <property type="entry name" value="KH_TYPE_1"/>
    <property type="match status" value="1"/>
</dbReference>
<dbReference type="PROSITE" id="PS50126">
    <property type="entry name" value="S1"/>
    <property type="match status" value="1"/>
</dbReference>
<gene>
    <name evidence="1" type="primary">pnp</name>
    <name type="ordered locus">cce_0623</name>
</gene>
<organism>
    <name type="scientific">Crocosphaera subtropica (strain ATCC 51142 / BH68)</name>
    <name type="common">Cyanothece sp. (strain ATCC 51142)</name>
    <dbReference type="NCBI Taxonomy" id="43989"/>
    <lineage>
        <taxon>Bacteria</taxon>
        <taxon>Bacillati</taxon>
        <taxon>Cyanobacteriota</taxon>
        <taxon>Cyanophyceae</taxon>
        <taxon>Oscillatoriophycideae</taxon>
        <taxon>Chroococcales</taxon>
        <taxon>Aphanothecaceae</taxon>
        <taxon>Crocosphaera</taxon>
        <taxon>Crocosphaera subtropica</taxon>
    </lineage>
</organism>
<name>PNP_CROS5</name>
<comment type="function">
    <text evidence="1">Involved in mRNA degradation. Catalyzes the phosphorolysis of single-stranded polyribonucleotides processively in the 3'- to 5'-direction.</text>
</comment>
<comment type="catalytic activity">
    <reaction evidence="1">
        <text>RNA(n+1) + phosphate = RNA(n) + a ribonucleoside 5'-diphosphate</text>
        <dbReference type="Rhea" id="RHEA:22096"/>
        <dbReference type="Rhea" id="RHEA-COMP:14527"/>
        <dbReference type="Rhea" id="RHEA-COMP:17342"/>
        <dbReference type="ChEBI" id="CHEBI:43474"/>
        <dbReference type="ChEBI" id="CHEBI:57930"/>
        <dbReference type="ChEBI" id="CHEBI:140395"/>
        <dbReference type="EC" id="2.7.7.8"/>
    </reaction>
</comment>
<comment type="cofactor">
    <cofactor evidence="1">
        <name>Mg(2+)</name>
        <dbReference type="ChEBI" id="CHEBI:18420"/>
    </cofactor>
</comment>
<comment type="subcellular location">
    <subcellularLocation>
        <location evidence="1">Cytoplasm</location>
    </subcellularLocation>
</comment>
<comment type="similarity">
    <text evidence="1">Belongs to the polyribonucleotide nucleotidyltransferase family.</text>
</comment>
<proteinExistence type="inferred from homology"/>
<keyword id="KW-0963">Cytoplasm</keyword>
<keyword id="KW-0460">Magnesium</keyword>
<keyword id="KW-0479">Metal-binding</keyword>
<keyword id="KW-0548">Nucleotidyltransferase</keyword>
<keyword id="KW-1185">Reference proteome</keyword>
<keyword id="KW-0694">RNA-binding</keyword>
<keyword id="KW-0808">Transferase</keyword>
<feature type="chain" id="PRO_1000185731" description="Polyribonucleotide nucleotidyltransferase">
    <location>
        <begin position="1"/>
        <end position="715"/>
    </location>
</feature>
<feature type="domain" description="KH" evidence="1">
    <location>
        <begin position="564"/>
        <end position="623"/>
    </location>
</feature>
<feature type="domain" description="S1 motif" evidence="1">
    <location>
        <begin position="633"/>
        <end position="701"/>
    </location>
</feature>
<feature type="binding site" evidence="1">
    <location>
        <position position="497"/>
    </location>
    <ligand>
        <name>Mg(2+)</name>
        <dbReference type="ChEBI" id="CHEBI:18420"/>
    </ligand>
</feature>
<feature type="binding site" evidence="1">
    <location>
        <position position="503"/>
    </location>
    <ligand>
        <name>Mg(2+)</name>
        <dbReference type="ChEBI" id="CHEBI:18420"/>
    </ligand>
</feature>
<sequence>MQEFDKSISFDGRDIRLKLGLLAPQAGGAVLIQSGDTAVLVTATTTKGREGIDFLPLTVDYEERLYAAGRIPGGFLRREGRPPERAILISRLIDRPLRPLFPNWWRNDIQIIATTLSMDEEVPPDVLAVTGSSIAVIQAQIPFYGPMAAVRVGLIGDDFIINPTYREVENGDLDLVVAGSPDGVVMVEAGANQLPEQDIIEAIDFGYEAVRDLIGAQYEIMEELGMEIAKAEPPSVDEALEKFISDRAADSIKKVLVQYDLGKAERDSALDNIKETAIEEAIAELPEDDPIKVTTSEDPKAVGNLYKGLTKKLMRSQIVDEGIRVDGRKLDEVRPISCRVGLLPPRVHGSALFTRGLTQVFSLATLGTPGDAQDLGDDLHPEDEKRYLHHYNFPPFSVGETKPLRSPGRREIGHGALAERAILPVLPPQDEFPYVVRVVSEVVSSNGSTSMGSVCGSTLALMDAGVPIIKPVSGAAMGLIREGKEVRILTDIQGIEDFLGDMDFKVAGTDTGITALQMDMKITGLSMDVVAKAIEQALPARLHILDKMLAVIDQPRPELSPFAPRLLTMKIDPEQIGLVIGPGGKTIKSITEQTGSKIDIADDGTVTIAAIQAKKAERARDLIFNMTRKLNEGEVYLGRVTRIIPIGAFVEVLPGKEGMIHISQLAERRVGKVEEEVAVGDEVVVKVREIDNKGRLNLTRLGIHPDEAAAVRKTF</sequence>
<evidence type="ECO:0000255" key="1">
    <source>
        <dbReference type="HAMAP-Rule" id="MF_01595"/>
    </source>
</evidence>
<accession>B1WQ52</accession>
<protein>
    <recommendedName>
        <fullName evidence="1">Polyribonucleotide nucleotidyltransferase</fullName>
        <ecNumber evidence="1">2.7.7.8</ecNumber>
    </recommendedName>
    <alternativeName>
        <fullName evidence="1">Polynucleotide phosphorylase</fullName>
        <shortName evidence="1">PNPase</shortName>
    </alternativeName>
</protein>
<reference key="1">
    <citation type="journal article" date="2008" name="Proc. Natl. Acad. Sci. U.S.A.">
        <title>The genome of Cyanothece 51142, a unicellular diazotrophic cyanobacterium important in the marine nitrogen cycle.</title>
        <authorList>
            <person name="Welsh E.A."/>
            <person name="Liberton M."/>
            <person name="Stoeckel J."/>
            <person name="Loh T."/>
            <person name="Elvitigala T."/>
            <person name="Wang C."/>
            <person name="Wollam A."/>
            <person name="Fulton R.S."/>
            <person name="Clifton S.W."/>
            <person name="Jacobs J.M."/>
            <person name="Aurora R."/>
            <person name="Ghosh B.K."/>
            <person name="Sherman L.A."/>
            <person name="Smith R.D."/>
            <person name="Wilson R.K."/>
            <person name="Pakrasi H.B."/>
        </authorList>
    </citation>
    <scope>NUCLEOTIDE SEQUENCE [LARGE SCALE GENOMIC DNA]</scope>
    <source>
        <strain>ATCC 51142 / BH68</strain>
    </source>
</reference>